<reference key="1">
    <citation type="journal article" date="2000" name="DNA Res.">
        <title>Structural analysis of Arabidopsis thaliana chromosome 3. II. Sequence features of the 4,251,695 bp regions covered by 90 P1, TAC and BAC clones.</title>
        <authorList>
            <person name="Kaneko T."/>
            <person name="Katoh T."/>
            <person name="Sato S."/>
            <person name="Nakamura Y."/>
            <person name="Asamizu E."/>
            <person name="Tabata S."/>
        </authorList>
    </citation>
    <scope>NUCLEOTIDE SEQUENCE [LARGE SCALE GENOMIC DNA]</scope>
    <source>
        <strain>cv. Columbia</strain>
    </source>
</reference>
<reference key="2">
    <citation type="journal article" date="2017" name="Plant J.">
        <title>Araport11: a complete reannotation of the Arabidopsis thaliana reference genome.</title>
        <authorList>
            <person name="Cheng C.Y."/>
            <person name="Krishnakumar V."/>
            <person name="Chan A.P."/>
            <person name="Thibaud-Nissen F."/>
            <person name="Schobel S."/>
            <person name="Town C.D."/>
        </authorList>
    </citation>
    <scope>GENOME REANNOTATION</scope>
    <source>
        <strain>cv. Columbia</strain>
    </source>
</reference>
<reference key="3">
    <citation type="submission" date="2002-03" db="EMBL/GenBank/DDBJ databases">
        <title>Full-length cDNA from Arabidopsis thaliana.</title>
        <authorList>
            <person name="Brover V.V."/>
            <person name="Troukhan M.E."/>
            <person name="Alexandrov N.A."/>
            <person name="Lu Y.-P."/>
            <person name="Flavell R.B."/>
            <person name="Feldmann K.A."/>
        </authorList>
    </citation>
    <scope>NUCLEOTIDE SEQUENCE [LARGE SCALE MRNA]</scope>
</reference>
<reference key="4">
    <citation type="submission" date="2006-03" db="EMBL/GenBank/DDBJ databases">
        <title>Arabidopsis ORF clones.</title>
        <authorList>
            <person name="Kim C.J."/>
            <person name="Chen H."/>
            <person name="Shinn P."/>
            <person name="Ecker J.R."/>
        </authorList>
    </citation>
    <scope>NUCLEOTIDE SEQUENCE [LARGE SCALE MRNA]</scope>
</reference>
<reference key="5">
    <citation type="journal article" date="2003" name="Plant Cell">
        <title>Inflorescence deficient in abscission controls floral organ abscission in Arabidopsis and identifies a novel family of putative ligands in plants.</title>
        <authorList>
            <person name="Butenko M.A."/>
            <person name="Patterson S.E."/>
            <person name="Grini P.E."/>
            <person name="Stenvik G.-E."/>
            <person name="Amundsen S.S."/>
            <person name="Mandal A."/>
            <person name="Aalen R.B."/>
        </authorList>
    </citation>
    <scope>IDENTIFICATION</scope>
    <scope>TISSUE SPECIFICITY</scope>
</reference>
<reference key="6">
    <citation type="journal article" date="2008" name="Plant Cell">
        <title>The EPIP peptide of INFLORESCENCE DEFICIENT IN ABSCISSION is sufficient to induce abscission in arabidopsis through the receptor-like kinases HAESA and HAESA-LIKE2.</title>
        <authorList>
            <person name="Stenvik G.-E."/>
            <person name="Tandstad N.M."/>
            <person name="Guo Y."/>
            <person name="Shi C.-L."/>
            <person name="Kristiansen W."/>
            <person name="Holmgren A."/>
            <person name="Clark S.E."/>
            <person name="Aalen R.B."/>
            <person name="Butenko M.A."/>
        </authorList>
    </citation>
    <scope>FUNCTION</scope>
    <scope>TISSUE SPECIFICITY</scope>
</reference>
<evidence type="ECO:0000250" key="1"/>
<evidence type="ECO:0000255" key="2"/>
<evidence type="ECO:0000269" key="3">
    <source>
    </source>
</evidence>
<evidence type="ECO:0000269" key="4">
    <source>
    </source>
</evidence>
<evidence type="ECO:0000305" key="5"/>
<protein>
    <recommendedName>
        <fullName>Protein IDA-LIKE 1</fullName>
    </recommendedName>
</protein>
<sequence>MNLSHKTMFMTLYIVFLLIFGSYNATARIGPIKLSETEIVQTRSRQEIIGGFTFKGRVFHSFSKRVLVPPSGPSMRHNSVVNNLKH</sequence>
<organism>
    <name type="scientific">Arabidopsis thaliana</name>
    <name type="common">Mouse-ear cress</name>
    <dbReference type="NCBI Taxonomy" id="3702"/>
    <lineage>
        <taxon>Eukaryota</taxon>
        <taxon>Viridiplantae</taxon>
        <taxon>Streptophyta</taxon>
        <taxon>Embryophyta</taxon>
        <taxon>Tracheophyta</taxon>
        <taxon>Spermatophyta</taxon>
        <taxon>Magnoliopsida</taxon>
        <taxon>eudicotyledons</taxon>
        <taxon>Gunneridae</taxon>
        <taxon>Pentapetalae</taxon>
        <taxon>rosids</taxon>
        <taxon>malvids</taxon>
        <taxon>Brassicales</taxon>
        <taxon>Brassicaceae</taxon>
        <taxon>Camelineae</taxon>
        <taxon>Arabidopsis</taxon>
    </lineage>
</organism>
<keyword id="KW-0002">3D-structure</keyword>
<keyword id="KW-1185">Reference proteome</keyword>
<keyword id="KW-0964">Secreted</keyword>
<keyword id="KW-0732">Signal</keyword>
<comment type="function">
    <text evidence="4">Involved in an ethylene-independent separation step of floral abscission. May act with RLK5 and HSL2 as ligand-receptor pairs.</text>
</comment>
<comment type="subcellular location">
    <subcellularLocation>
        <location evidence="1">Secreted</location>
        <location evidence="1">Extracellular space</location>
    </subcellularLocation>
</comment>
<comment type="tissue specificity">
    <text evidence="3 4">Expressed in roots.</text>
</comment>
<comment type="domain">
    <text>The N-terminal signal peptide is necessary for IDL1 function.</text>
</comment>
<comment type="miscellaneous">
    <text>IDL1 is redundant with IDA.</text>
</comment>
<comment type="sequence caution" evidence="5">
    <conflict type="erroneous initiation">
        <sequence resource="EMBL-CDS" id="AAM63318"/>
    </conflict>
</comment>
<proteinExistence type="evidence at protein level"/>
<gene>
    <name type="primary">IDL1</name>
    <name type="ordered locus">At3g25655</name>
    <name type="ORF">T5M7</name>
</gene>
<feature type="signal peptide" evidence="2">
    <location>
        <begin position="1"/>
        <end position="27"/>
    </location>
</feature>
<feature type="chain" id="PRO_0000383589" description="Protein IDA-LIKE 1">
    <location>
        <begin position="28"/>
        <end position="86"/>
    </location>
</feature>
<accession>Q29PV4</accession>
<accession>Q8LDA6</accession>
<name>IDL1_ARATH</name>
<dbReference type="EMBL" id="AP001313">
    <property type="status" value="NOT_ANNOTATED_CDS"/>
    <property type="molecule type" value="Genomic_DNA"/>
</dbReference>
<dbReference type="EMBL" id="CP002686">
    <property type="protein sequence ID" value="AEE77047.1"/>
    <property type="molecule type" value="Genomic_DNA"/>
</dbReference>
<dbReference type="EMBL" id="AY086111">
    <property type="protein sequence ID" value="AAM63318.1"/>
    <property type="status" value="ALT_INIT"/>
    <property type="molecule type" value="mRNA"/>
</dbReference>
<dbReference type="EMBL" id="BT024802">
    <property type="protein sequence ID" value="ABD60685.1"/>
    <property type="molecule type" value="mRNA"/>
</dbReference>
<dbReference type="RefSeq" id="NP_566774.1">
    <property type="nucleotide sequence ID" value="NM_113464.3"/>
</dbReference>
<dbReference type="PDB" id="5IYV">
    <property type="method" value="X-ray"/>
    <property type="resolution" value="2.56 A"/>
    <property type="chains" value="B=67-78"/>
</dbReference>
<dbReference type="PDB" id="7OGO">
    <property type="method" value="X-ray"/>
    <property type="resolution" value="2.38 A"/>
    <property type="chains" value="CCC/FFF=65-78"/>
</dbReference>
<dbReference type="PDBsum" id="5IYV"/>
<dbReference type="PDBsum" id="7OGO"/>
<dbReference type="SMR" id="Q29PV4"/>
<dbReference type="STRING" id="3702.Q29PV4"/>
<dbReference type="PaxDb" id="3702-AT3G25655.1"/>
<dbReference type="EnsemblPlants" id="AT3G25655.1">
    <property type="protein sequence ID" value="AT3G25655.1"/>
    <property type="gene ID" value="AT3G25655"/>
</dbReference>
<dbReference type="GeneID" id="822153"/>
<dbReference type="Gramene" id="AT3G25655.1">
    <property type="protein sequence ID" value="AT3G25655.1"/>
    <property type="gene ID" value="AT3G25655"/>
</dbReference>
<dbReference type="KEGG" id="ath:AT3G25655"/>
<dbReference type="Araport" id="AT3G25655"/>
<dbReference type="TAIR" id="AT3G25655">
    <property type="gene designation" value="IDL1"/>
</dbReference>
<dbReference type="eggNOG" id="ENOG502S9CH">
    <property type="taxonomic scope" value="Eukaryota"/>
</dbReference>
<dbReference type="HOGENOM" id="CLU_2593091_0_0_1"/>
<dbReference type="InParanoid" id="Q29PV4"/>
<dbReference type="OMA" id="LSHKTMF"/>
<dbReference type="OrthoDB" id="994133at2759"/>
<dbReference type="PhylomeDB" id="Q29PV4"/>
<dbReference type="PRO" id="PR:Q29PV4"/>
<dbReference type="Proteomes" id="UP000006548">
    <property type="component" value="Chromosome 3"/>
</dbReference>
<dbReference type="ExpressionAtlas" id="Q29PV4">
    <property type="expression patterns" value="baseline and differential"/>
</dbReference>
<dbReference type="GO" id="GO:0005576">
    <property type="term" value="C:extracellular region"/>
    <property type="evidence" value="ECO:0007669"/>
    <property type="project" value="UniProtKB-SubCell"/>
</dbReference>
<dbReference type="GO" id="GO:0010227">
    <property type="term" value="P:floral organ abscission"/>
    <property type="evidence" value="ECO:0000315"/>
    <property type="project" value="TAIR"/>
</dbReference>